<keyword id="KW-1157">Cap snatching</keyword>
<keyword id="KW-1262">Eukaryotic host gene expression shutoff by virus</keyword>
<keyword id="KW-1191">Eukaryotic host transcription shutoff by virus</keyword>
<keyword id="KW-1190">Host gene expression shutoff by virus</keyword>
<keyword id="KW-1045">Host mitochondrion</keyword>
<keyword id="KW-1048">Host nucleus</keyword>
<keyword id="KW-0945">Host-virus interaction</keyword>
<keyword id="KW-1090">Inhibition of host innate immune response by virus</keyword>
<keyword id="KW-1097">Inhibition of host MAVS by virus</keyword>
<keyword id="KW-1113">Inhibition of host RLR pathway by virus</keyword>
<keyword id="KW-1104">Inhibition of host RNA polymerase II by virus</keyword>
<keyword id="KW-0506">mRNA capping</keyword>
<keyword id="KW-0507">mRNA processing</keyword>
<keyword id="KW-0899">Viral immunoevasion</keyword>
<keyword id="KW-1195">Viral transcription</keyword>
<keyword id="KW-0946">Virion</keyword>
<dbReference type="EMBL" id="M73517">
    <property type="protein sequence ID" value="AAA43131.1"/>
    <property type="molecule type" value="Genomic_RNA"/>
</dbReference>
<dbReference type="SMR" id="P26117"/>
<dbReference type="GO" id="GO:0033650">
    <property type="term" value="C:host cell mitochondrion"/>
    <property type="evidence" value="ECO:0007669"/>
    <property type="project" value="UniProtKB-SubCell"/>
</dbReference>
<dbReference type="GO" id="GO:0042025">
    <property type="term" value="C:host cell nucleus"/>
    <property type="evidence" value="ECO:0007669"/>
    <property type="project" value="UniProtKB-SubCell"/>
</dbReference>
<dbReference type="GO" id="GO:0044423">
    <property type="term" value="C:virion component"/>
    <property type="evidence" value="ECO:0007669"/>
    <property type="project" value="UniProtKB-UniRule"/>
</dbReference>
<dbReference type="GO" id="GO:0003723">
    <property type="term" value="F:RNA binding"/>
    <property type="evidence" value="ECO:0007669"/>
    <property type="project" value="UniProtKB-UniRule"/>
</dbReference>
<dbReference type="GO" id="GO:0003968">
    <property type="term" value="F:RNA-directed RNA polymerase activity"/>
    <property type="evidence" value="ECO:0007669"/>
    <property type="project" value="UniProtKB-UniRule"/>
</dbReference>
<dbReference type="GO" id="GO:0006370">
    <property type="term" value="P:7-methylguanosine mRNA capping"/>
    <property type="evidence" value="ECO:0007669"/>
    <property type="project" value="UniProtKB-UniRule"/>
</dbReference>
<dbReference type="GO" id="GO:0075526">
    <property type="term" value="P:cap snatching"/>
    <property type="evidence" value="ECO:0007669"/>
    <property type="project" value="UniProtKB-UniRule"/>
</dbReference>
<dbReference type="GO" id="GO:0006351">
    <property type="term" value="P:DNA-templated transcription"/>
    <property type="evidence" value="ECO:0007669"/>
    <property type="project" value="UniProtKB-UniRule"/>
</dbReference>
<dbReference type="GO" id="GO:0039545">
    <property type="term" value="P:symbiont-mediated suppression of host cytoplasmic pattern recognition receptor signaling pathway via inhibition of MAVS activity"/>
    <property type="evidence" value="ECO:0007669"/>
    <property type="project" value="UniProtKB-UniRule"/>
</dbReference>
<dbReference type="GO" id="GO:0039657">
    <property type="term" value="P:symbiont-mediated suppression of host gene expression"/>
    <property type="evidence" value="ECO:0007669"/>
    <property type="project" value="UniProtKB-KW"/>
</dbReference>
<dbReference type="GO" id="GO:0039523">
    <property type="term" value="P:symbiont-mediated suppression of host mRNA transcription via inhibition of RNA polymerase II activity"/>
    <property type="evidence" value="ECO:0007669"/>
    <property type="project" value="UniProtKB-UniRule"/>
</dbReference>
<dbReference type="GO" id="GO:0039694">
    <property type="term" value="P:viral RNA genome replication"/>
    <property type="evidence" value="ECO:0007669"/>
    <property type="project" value="InterPro"/>
</dbReference>
<dbReference type="FunFam" id="3.30.30.90:FF:000001">
    <property type="entry name" value="Polymerase basic protein 2"/>
    <property type="match status" value="1"/>
</dbReference>
<dbReference type="Gene3D" id="3.30.30.90">
    <property type="entry name" value="Polymerase Basic Protein 2, C-terminal domain"/>
    <property type="match status" value="1"/>
</dbReference>
<dbReference type="HAMAP" id="MF_04062">
    <property type="entry name" value="INV_PB2"/>
    <property type="match status" value="1"/>
</dbReference>
<dbReference type="InterPro" id="IPR049110">
    <property type="entry name" value="Flu_PB2_2nd"/>
</dbReference>
<dbReference type="InterPro" id="IPR049114">
    <property type="entry name" value="Flu_PB2_6th"/>
</dbReference>
<dbReference type="InterPro" id="IPR049115">
    <property type="entry name" value="Flu_PB2_C"/>
</dbReference>
<dbReference type="InterPro" id="IPR048298">
    <property type="entry name" value="Flu_PB2_CAP-bd"/>
</dbReference>
<dbReference type="InterPro" id="IPR049111">
    <property type="entry name" value="Flu_PB2_middle"/>
</dbReference>
<dbReference type="InterPro" id="IPR049106">
    <property type="entry name" value="Flu_PB2_N"/>
</dbReference>
<dbReference type="InterPro" id="IPR001591">
    <property type="entry name" value="INV_PB2"/>
</dbReference>
<dbReference type="InterPro" id="IPR049113">
    <property type="entry name" value="PB2_helical"/>
</dbReference>
<dbReference type="InterPro" id="IPR037258">
    <property type="entry name" value="PDB2_C"/>
</dbReference>
<dbReference type="Pfam" id="PF20947">
    <property type="entry name" value="Flu_PB2_1st"/>
    <property type="match status" value="1"/>
</dbReference>
<dbReference type="Pfam" id="PF20948">
    <property type="entry name" value="Flu_PB2_2nd"/>
    <property type="match status" value="1"/>
</dbReference>
<dbReference type="Pfam" id="PF20949">
    <property type="entry name" value="Flu_PB2_3rd"/>
    <property type="match status" value="1"/>
</dbReference>
<dbReference type="Pfam" id="PF20950">
    <property type="entry name" value="Flu_PB2_4th"/>
    <property type="match status" value="1"/>
</dbReference>
<dbReference type="Pfam" id="PF00604">
    <property type="entry name" value="Flu_PB2_5th"/>
    <property type="match status" value="1"/>
</dbReference>
<dbReference type="Pfam" id="PF20951">
    <property type="entry name" value="Flu_PB2_6th"/>
    <property type="match status" value="1"/>
</dbReference>
<dbReference type="Pfam" id="PF20952">
    <property type="entry name" value="Flu_PB2_7th"/>
    <property type="match status" value="1"/>
</dbReference>
<dbReference type="SUPFAM" id="SSF160453">
    <property type="entry name" value="PB2 C-terminal domain-like"/>
    <property type="match status" value="1"/>
</dbReference>
<organism>
    <name type="scientific">Influenza A virus (strain A/Memphis/8/1988 H3N2)</name>
    <dbReference type="NCBI Taxonomy" id="383588"/>
    <lineage>
        <taxon>Viruses</taxon>
        <taxon>Riboviria</taxon>
        <taxon>Orthornavirae</taxon>
        <taxon>Negarnaviricota</taxon>
        <taxon>Polyploviricotina</taxon>
        <taxon>Insthoviricetes</taxon>
        <taxon>Articulavirales</taxon>
        <taxon>Orthomyxoviridae</taxon>
        <taxon>Alphainfluenzavirus</taxon>
        <taxon>Alphainfluenzavirus influenzae</taxon>
        <taxon>Influenza A virus</taxon>
    </lineage>
</organism>
<feature type="chain" id="PRO_0000078832" description="Polymerase basic protein 2">
    <location>
        <begin position="1"/>
        <end position="759"/>
    </location>
</feature>
<feature type="short sequence motif" description="Nuclear localization signal" evidence="1">
    <location>
        <begin position="736"/>
        <end position="739"/>
    </location>
</feature>
<feature type="site" description="Mammalian adaptation" evidence="1">
    <location>
        <position position="627"/>
    </location>
</feature>
<evidence type="ECO:0000255" key="1">
    <source>
        <dbReference type="HAMAP-Rule" id="MF_04062"/>
    </source>
</evidence>
<organismHost>
    <name type="scientific">Aves</name>
    <dbReference type="NCBI Taxonomy" id="8782"/>
</organismHost>
<organismHost>
    <name type="scientific">Cetacea</name>
    <name type="common">whales</name>
    <dbReference type="NCBI Taxonomy" id="9721"/>
</organismHost>
<organismHost>
    <name type="scientific">Homo sapiens</name>
    <name type="common">Human</name>
    <dbReference type="NCBI Taxonomy" id="9606"/>
</organismHost>
<organismHost>
    <name type="scientific">Phocidae</name>
    <name type="common">true seals</name>
    <dbReference type="NCBI Taxonomy" id="9709"/>
</organismHost>
<organismHost>
    <name type="scientific">Sus scrofa</name>
    <name type="common">Pig</name>
    <dbReference type="NCBI Taxonomy" id="9823"/>
</organismHost>
<accession>P26117</accession>
<reference key="1">
    <citation type="journal article" date="1990" name="J. Virol.">
        <title>Evolution of influenza A virus PB2 genes: implications for evolution of the ribonucleoprotein complex and origin of human influenza A virus.</title>
        <authorList>
            <person name="Gorman O.T."/>
            <person name="Donis R.O."/>
            <person name="Kawaoka Y."/>
            <person name="Webster R.G."/>
        </authorList>
    </citation>
    <scope>NUCLEOTIDE SEQUENCE [GENOMIC RNA]</scope>
</reference>
<name>PB2_I88A3</name>
<protein>
    <recommendedName>
        <fullName evidence="1">Polymerase basic protein 2</fullName>
    </recommendedName>
    <alternativeName>
        <fullName evidence="1">RNA-directed RNA polymerase subunit P3</fullName>
    </alternativeName>
</protein>
<gene>
    <name evidence="1" type="primary">PB2</name>
</gene>
<comment type="function">
    <text evidence="1">Plays an essential role in transcription initiation and cap-stealing mechanism, in which cellular capped pre-mRNAs are used to generate primers for viral transcription. Recognizes and binds the 7-methylguanosine-containing cap of the target pre-RNA which is subsequently cleaved after 10-13 nucleotides by the viral protein PA. Plays a role in the initiation of the viral genome replication and modulates the activity of the ribonucleoprotein (RNP) complex. In addition, participates in the inhibition of type I interferon induction through interaction with and inhibition of the host mitochondrial antiviral signaling protein MAVS.</text>
</comment>
<comment type="subunit">
    <text evidence="1">Influenza RNA polymerase is composed of three subunits: PB1, PB2 and PA. Interacts (via N-terminus) with PB1 (via C-terminus). Interacts with nucleoprotein NP (via N-terminus). Interacts (via N-terminus) with host MAVS (via N-terminus); this interaction inhibits host innate immune response.</text>
</comment>
<comment type="subcellular location">
    <subcellularLocation>
        <location evidence="1">Virion</location>
    </subcellularLocation>
    <subcellularLocation>
        <location evidence="1">Host nucleus</location>
    </subcellularLocation>
    <subcellularLocation>
        <location evidence="1">Host mitochondrion</location>
    </subcellularLocation>
</comment>
<comment type="similarity">
    <text evidence="1">Belongs to the influenza viruses PB2 family.</text>
</comment>
<proteinExistence type="inferred from homology"/>
<sequence>MERIKELRNLMSQSRTRGILTKTTVDHMAIIKKYTSGRQEKNPSLRMKWMMAMKYPITADKRITEMVPERNEQGQTLWSKMSDAGSDRVMVSPLAVTWWNRNGQVTNTVHYPKVYKTYFDKVERLKHGTFGPVHFRNQVKIRRRVDINPGHADLSAKEAKDVIMEVVFPNEVGARILTSESQLTITKEKKEELRDCKISPLMVAYMLERELVRKTRFLPVAGGTSSIYIEVLHLTQGTCWEQMYTPGGEVRNDDVDQSLIIAARNIVRRAAVSADPLASLLEMCHSQQIGGTRMVDILRQNPTEEQAVDICKAAMGLRISSSFSFGGFTFKRTSGSSIKREEEVLTGNLQTLKIRVHEGYEEFTMVGKRATAILRKATRRLVQLIVSGRDEQSIAEAIIVAMVFSQEDCMIKAVRGDLNFVNRANQRLNPMHQLLRHFQKDAKVLFQNWGIEHIDSVMGMVGVLPDMTPSTEMSMRGIRVSKMGVDEYSSTERVVVSIDRFLRVRDQRGNVLLSPEEVSETQGTERLTITYSSSMMWEINGPESVLVNTYQWIIRNWETVKIQWSQNPAMLYNKMEFEPFQSLVPKAIRGQYSGFVRTLFQQMRDVLGTFDTTQIIKLLPFAAAPPKQSRMQFSSLTVNVRGSGMRILVRGNSPVFNYNKTTKRLTILGKDAGTLIEDPDESTSGVESAVLRGFLILGKEDRRYGPALSINELSNLAKGEKANVLIGQGDVVLVMKRKRDSSILTDSQTATKRIRMAIN</sequence>